<name>Y598_BRUME</name>
<reference key="1">
    <citation type="journal article" date="2002" name="Proc. Natl. Acad. Sci. U.S.A.">
        <title>The genome sequence of the facultative intracellular pathogen Brucella melitensis.</title>
        <authorList>
            <person name="DelVecchio V.G."/>
            <person name="Kapatral V."/>
            <person name="Redkar R.J."/>
            <person name="Patra G."/>
            <person name="Mujer C."/>
            <person name="Los T."/>
            <person name="Ivanova N."/>
            <person name="Anderson I."/>
            <person name="Bhattacharyya A."/>
            <person name="Lykidis A."/>
            <person name="Reznik G."/>
            <person name="Jablonski L."/>
            <person name="Larsen N."/>
            <person name="D'Souza M."/>
            <person name="Bernal A."/>
            <person name="Mazur M."/>
            <person name="Goltsman E."/>
            <person name="Selkov E."/>
            <person name="Elzer P.H."/>
            <person name="Hagius S."/>
            <person name="O'Callaghan D."/>
            <person name="Letesson J.-J."/>
            <person name="Haselkorn R."/>
            <person name="Kyrpides N.C."/>
            <person name="Overbeek R."/>
        </authorList>
    </citation>
    <scope>NUCLEOTIDE SEQUENCE [LARGE SCALE GENOMIC DNA]</scope>
    <source>
        <strain>ATCC 23456 / CCUG 17765 / NCTC 10094 / 16M</strain>
    </source>
</reference>
<feature type="chain" id="PRO_0000208915" description="UPF0303 protein BMEI0598">
    <location>
        <begin position="1"/>
        <end position="169"/>
    </location>
</feature>
<gene>
    <name type="ordered locus">BMEI0598</name>
</gene>
<dbReference type="EMBL" id="AE008917">
    <property type="protein sequence ID" value="AAL51779.1"/>
    <property type="molecule type" value="Genomic_DNA"/>
</dbReference>
<dbReference type="PIR" id="AH3326">
    <property type="entry name" value="AH3326"/>
</dbReference>
<dbReference type="RefSeq" id="WP_004686944.1">
    <property type="nucleotide sequence ID" value="NC_003317.1"/>
</dbReference>
<dbReference type="SMR" id="Q8YI47"/>
<dbReference type="GeneID" id="29593384"/>
<dbReference type="KEGG" id="bme:BMEI0598"/>
<dbReference type="KEGG" id="bmel:DK63_828"/>
<dbReference type="PATRIC" id="fig|224914.52.peg.870"/>
<dbReference type="eggNOG" id="COG4702">
    <property type="taxonomic scope" value="Bacteria"/>
</dbReference>
<dbReference type="PhylomeDB" id="Q8YI47"/>
<dbReference type="Proteomes" id="UP000000419">
    <property type="component" value="Chromosome I"/>
</dbReference>
<dbReference type="Gene3D" id="3.30.450.150">
    <property type="entry name" value="Haem-degrading domain"/>
    <property type="match status" value="1"/>
</dbReference>
<dbReference type="HAMAP" id="MF_00761">
    <property type="entry name" value="UPF0303"/>
    <property type="match status" value="1"/>
</dbReference>
<dbReference type="InterPro" id="IPR005624">
    <property type="entry name" value="PduO/GlcC-like"/>
</dbReference>
<dbReference type="InterPro" id="IPR038084">
    <property type="entry name" value="PduO/GlcC-like_sf"/>
</dbReference>
<dbReference type="InterPro" id="IPR010371">
    <property type="entry name" value="YBR137W-like"/>
</dbReference>
<dbReference type="NCBIfam" id="NF002693">
    <property type="entry name" value="PRK02487.1-2"/>
    <property type="match status" value="1"/>
</dbReference>
<dbReference type="NCBIfam" id="NF002696">
    <property type="entry name" value="PRK02487.1-5"/>
    <property type="match status" value="1"/>
</dbReference>
<dbReference type="PANTHER" id="PTHR28255">
    <property type="match status" value="1"/>
</dbReference>
<dbReference type="PANTHER" id="PTHR28255:SF1">
    <property type="entry name" value="UPF0303 PROTEIN YBR137W"/>
    <property type="match status" value="1"/>
</dbReference>
<dbReference type="Pfam" id="PF03928">
    <property type="entry name" value="HbpS-like"/>
    <property type="match status" value="1"/>
</dbReference>
<dbReference type="PIRSF" id="PIRSF008757">
    <property type="entry name" value="UCP008757"/>
    <property type="match status" value="1"/>
</dbReference>
<dbReference type="SUPFAM" id="SSF143744">
    <property type="entry name" value="GlcG-like"/>
    <property type="match status" value="1"/>
</dbReference>
<proteinExistence type="inferred from homology"/>
<comment type="similarity">
    <text evidence="1">Belongs to the UPF0303 family.</text>
</comment>
<accession>Q8YI47</accession>
<sequence>MAQGDDNKQAIGQIIRQEQALIFPSLDENDAFSLGQRIRDIAVKDKLGIAIDISLWGRRLFFAATAGATADNTEWLRRKFNVVRRFHVSTYRLVLEQNREDRMFAPYKALDVADYALAGGGFPIRVSGAGVIGAVIVSGLPQREDHNLVVRAVAEHVGQDPVALALPAA</sequence>
<organism>
    <name type="scientific">Brucella melitensis biotype 1 (strain ATCC 23456 / CCUG 17765 / NCTC 10094 / 16M)</name>
    <dbReference type="NCBI Taxonomy" id="224914"/>
    <lineage>
        <taxon>Bacteria</taxon>
        <taxon>Pseudomonadati</taxon>
        <taxon>Pseudomonadota</taxon>
        <taxon>Alphaproteobacteria</taxon>
        <taxon>Hyphomicrobiales</taxon>
        <taxon>Brucellaceae</taxon>
        <taxon>Brucella/Ochrobactrum group</taxon>
        <taxon>Brucella</taxon>
    </lineage>
</organism>
<evidence type="ECO:0000255" key="1">
    <source>
        <dbReference type="HAMAP-Rule" id="MF_00761"/>
    </source>
</evidence>
<protein>
    <recommendedName>
        <fullName evidence="1">UPF0303 protein BMEI0598</fullName>
    </recommendedName>
</protein>